<gene>
    <name evidence="1" type="primary">msrA</name>
    <name type="ordered locus">Mnod_1140</name>
</gene>
<dbReference type="EC" id="1.8.4.11" evidence="1"/>
<dbReference type="EMBL" id="CP001349">
    <property type="protein sequence ID" value="ACL56146.1"/>
    <property type="molecule type" value="Genomic_DNA"/>
</dbReference>
<dbReference type="RefSeq" id="WP_015927844.1">
    <property type="nucleotide sequence ID" value="NC_011894.1"/>
</dbReference>
<dbReference type="SMR" id="B8IJD1"/>
<dbReference type="STRING" id="460265.Mnod_1140"/>
<dbReference type="KEGG" id="mno:Mnod_1140"/>
<dbReference type="eggNOG" id="COG0225">
    <property type="taxonomic scope" value="Bacteria"/>
</dbReference>
<dbReference type="HOGENOM" id="CLU_031040_10_3_5"/>
<dbReference type="OrthoDB" id="4174719at2"/>
<dbReference type="Proteomes" id="UP000008207">
    <property type="component" value="Chromosome"/>
</dbReference>
<dbReference type="GO" id="GO:0005737">
    <property type="term" value="C:cytoplasm"/>
    <property type="evidence" value="ECO:0007669"/>
    <property type="project" value="TreeGrafter"/>
</dbReference>
<dbReference type="GO" id="GO:0036456">
    <property type="term" value="F:L-methionine-(S)-S-oxide reductase activity"/>
    <property type="evidence" value="ECO:0007669"/>
    <property type="project" value="TreeGrafter"/>
</dbReference>
<dbReference type="GO" id="GO:0008113">
    <property type="term" value="F:peptide-methionine (S)-S-oxide reductase activity"/>
    <property type="evidence" value="ECO:0007669"/>
    <property type="project" value="UniProtKB-UniRule"/>
</dbReference>
<dbReference type="GO" id="GO:0034599">
    <property type="term" value="P:cellular response to oxidative stress"/>
    <property type="evidence" value="ECO:0007669"/>
    <property type="project" value="TreeGrafter"/>
</dbReference>
<dbReference type="GO" id="GO:0036211">
    <property type="term" value="P:protein modification process"/>
    <property type="evidence" value="ECO:0007669"/>
    <property type="project" value="UniProtKB-UniRule"/>
</dbReference>
<dbReference type="FunFam" id="3.30.1060.10:FF:000001">
    <property type="entry name" value="Peptide methionine sulfoxide reductase MsrA"/>
    <property type="match status" value="1"/>
</dbReference>
<dbReference type="Gene3D" id="3.30.1060.10">
    <property type="entry name" value="Peptide methionine sulphoxide reductase MsrA"/>
    <property type="match status" value="1"/>
</dbReference>
<dbReference type="HAMAP" id="MF_01401">
    <property type="entry name" value="MsrA"/>
    <property type="match status" value="1"/>
</dbReference>
<dbReference type="InterPro" id="IPR002569">
    <property type="entry name" value="Met_Sox_Rdtase_MsrA_dom"/>
</dbReference>
<dbReference type="InterPro" id="IPR036509">
    <property type="entry name" value="Met_Sox_Rdtase_MsrA_sf"/>
</dbReference>
<dbReference type="InterPro" id="IPR050162">
    <property type="entry name" value="MsrA_MetSO_reductase"/>
</dbReference>
<dbReference type="NCBIfam" id="TIGR00401">
    <property type="entry name" value="msrA"/>
    <property type="match status" value="1"/>
</dbReference>
<dbReference type="PANTHER" id="PTHR42799">
    <property type="entry name" value="MITOCHONDRIAL PEPTIDE METHIONINE SULFOXIDE REDUCTASE"/>
    <property type="match status" value="1"/>
</dbReference>
<dbReference type="PANTHER" id="PTHR42799:SF2">
    <property type="entry name" value="MITOCHONDRIAL PEPTIDE METHIONINE SULFOXIDE REDUCTASE"/>
    <property type="match status" value="1"/>
</dbReference>
<dbReference type="Pfam" id="PF01625">
    <property type="entry name" value="PMSR"/>
    <property type="match status" value="1"/>
</dbReference>
<dbReference type="SUPFAM" id="SSF55068">
    <property type="entry name" value="Peptide methionine sulfoxide reductase"/>
    <property type="match status" value="1"/>
</dbReference>
<evidence type="ECO:0000255" key="1">
    <source>
        <dbReference type="HAMAP-Rule" id="MF_01401"/>
    </source>
</evidence>
<protein>
    <recommendedName>
        <fullName evidence="1">Peptide methionine sulfoxide reductase MsrA</fullName>
        <shortName evidence="1">Protein-methionine-S-oxide reductase</shortName>
        <ecNumber evidence="1">1.8.4.11</ecNumber>
    </recommendedName>
    <alternativeName>
        <fullName evidence="1">Peptide-methionine (S)-S-oxide reductase</fullName>
        <shortName evidence="1">Peptide Met(O) reductase</shortName>
    </alternativeName>
</protein>
<name>MSRA_METNO</name>
<sequence length="221" mass="24123">MLFFRKRAEMPAPDQILPGRPTPLPTAERHFVNGRPLKGPYPEGIETALFGLGCFWGAERKFWQLGDGIWVTAVGYAAGTTPNPTYEEVCTGLTGHNEVVLVAYDPAAMPFERLLKTFWESHDPTQGMRQGNDVGTQYRSGLYVADAERRAQAEASRDAYGEALRAKGYGPITTEIRDPGPFYFAEAYHQQYLAKNPAGYCGLGGTGVACPIGTGVRNAAE</sequence>
<feature type="chain" id="PRO_1000184565" description="Peptide methionine sulfoxide reductase MsrA">
    <location>
        <begin position="1"/>
        <end position="221"/>
    </location>
</feature>
<feature type="active site" evidence="1">
    <location>
        <position position="54"/>
    </location>
</feature>
<keyword id="KW-0560">Oxidoreductase</keyword>
<keyword id="KW-1185">Reference proteome</keyword>
<proteinExistence type="inferred from homology"/>
<accession>B8IJD1</accession>
<comment type="function">
    <text evidence="1">Has an important function as a repair enzyme for proteins that have been inactivated by oxidation. Catalyzes the reversible oxidation-reduction of methionine sulfoxide in proteins to methionine.</text>
</comment>
<comment type="catalytic activity">
    <reaction evidence="1">
        <text>L-methionyl-[protein] + [thioredoxin]-disulfide + H2O = L-methionyl-(S)-S-oxide-[protein] + [thioredoxin]-dithiol</text>
        <dbReference type="Rhea" id="RHEA:14217"/>
        <dbReference type="Rhea" id="RHEA-COMP:10698"/>
        <dbReference type="Rhea" id="RHEA-COMP:10700"/>
        <dbReference type="Rhea" id="RHEA-COMP:12313"/>
        <dbReference type="Rhea" id="RHEA-COMP:12315"/>
        <dbReference type="ChEBI" id="CHEBI:15377"/>
        <dbReference type="ChEBI" id="CHEBI:16044"/>
        <dbReference type="ChEBI" id="CHEBI:29950"/>
        <dbReference type="ChEBI" id="CHEBI:44120"/>
        <dbReference type="ChEBI" id="CHEBI:50058"/>
        <dbReference type="EC" id="1.8.4.11"/>
    </reaction>
</comment>
<comment type="catalytic activity">
    <reaction evidence="1">
        <text>[thioredoxin]-disulfide + L-methionine + H2O = L-methionine (S)-S-oxide + [thioredoxin]-dithiol</text>
        <dbReference type="Rhea" id="RHEA:19993"/>
        <dbReference type="Rhea" id="RHEA-COMP:10698"/>
        <dbReference type="Rhea" id="RHEA-COMP:10700"/>
        <dbReference type="ChEBI" id="CHEBI:15377"/>
        <dbReference type="ChEBI" id="CHEBI:29950"/>
        <dbReference type="ChEBI" id="CHEBI:50058"/>
        <dbReference type="ChEBI" id="CHEBI:57844"/>
        <dbReference type="ChEBI" id="CHEBI:58772"/>
        <dbReference type="EC" id="1.8.4.11"/>
    </reaction>
</comment>
<comment type="similarity">
    <text evidence="1">Belongs to the MsrA Met sulfoxide reductase family.</text>
</comment>
<reference key="1">
    <citation type="submission" date="2009-01" db="EMBL/GenBank/DDBJ databases">
        <title>Complete sequence of chromosome of Methylobacterium nodulans ORS 2060.</title>
        <authorList>
            <consortium name="US DOE Joint Genome Institute"/>
            <person name="Lucas S."/>
            <person name="Copeland A."/>
            <person name="Lapidus A."/>
            <person name="Glavina del Rio T."/>
            <person name="Dalin E."/>
            <person name="Tice H."/>
            <person name="Bruce D."/>
            <person name="Goodwin L."/>
            <person name="Pitluck S."/>
            <person name="Sims D."/>
            <person name="Brettin T."/>
            <person name="Detter J.C."/>
            <person name="Han C."/>
            <person name="Larimer F."/>
            <person name="Land M."/>
            <person name="Hauser L."/>
            <person name="Kyrpides N."/>
            <person name="Ivanova N."/>
            <person name="Marx C.J."/>
            <person name="Richardson P."/>
        </authorList>
    </citation>
    <scope>NUCLEOTIDE SEQUENCE [LARGE SCALE GENOMIC DNA]</scope>
    <source>
        <strain>LMG 21967 / CNCM I-2342 / ORS 2060</strain>
    </source>
</reference>
<organism>
    <name type="scientific">Methylobacterium nodulans (strain LMG 21967 / CNCM I-2342 / ORS 2060)</name>
    <dbReference type="NCBI Taxonomy" id="460265"/>
    <lineage>
        <taxon>Bacteria</taxon>
        <taxon>Pseudomonadati</taxon>
        <taxon>Pseudomonadota</taxon>
        <taxon>Alphaproteobacteria</taxon>
        <taxon>Hyphomicrobiales</taxon>
        <taxon>Methylobacteriaceae</taxon>
        <taxon>Methylobacterium</taxon>
    </lineage>
</organism>